<gene>
    <name type="ordered locus">MIMI_L262</name>
</gene>
<protein>
    <recommendedName>
        <fullName>Uncharacterized protein L262</fullName>
    </recommendedName>
</protein>
<sequence>MDDQIKEIRQKKHQQYLDHLNGIIPNNQDKQNHIVVPNLINQINPINATNQINPINTTGQRNHVLDKIKFNYAAIRIQRFIRKKMFEPKCINEEEILSIPSIYRLRIDITDMHINEYNEEDIPNDILEYHRIIYKSINFSTDSTLFFRYCFDIRKLYPIRHQQINIFGEYFYLQPDDHKYINCIWKKVNNITSESIRYLTDFDYHKSLSVDSHKSN</sequence>
<proteinExistence type="predicted"/>
<keyword id="KW-1185">Reference proteome</keyword>
<name>YL262_MIMIV</name>
<feature type="chain" id="PRO_0000071256" description="Uncharacterized protein L262">
    <location>
        <begin position="1"/>
        <end position="216"/>
    </location>
</feature>
<accession>Q5UP21</accession>
<reference key="1">
    <citation type="journal article" date="2004" name="Science">
        <title>The 1.2-megabase genome sequence of Mimivirus.</title>
        <authorList>
            <person name="Raoult D."/>
            <person name="Audic S."/>
            <person name="Robert C."/>
            <person name="Abergel C."/>
            <person name="Renesto P."/>
            <person name="Ogata H."/>
            <person name="La Scola B."/>
            <person name="Susan M."/>
            <person name="Claverie J.-M."/>
        </authorList>
    </citation>
    <scope>NUCLEOTIDE SEQUENCE [LARGE SCALE GENOMIC DNA]</scope>
    <source>
        <strain>Rowbotham-Bradford</strain>
    </source>
</reference>
<dbReference type="EMBL" id="AY653733">
    <property type="protein sequence ID" value="AAV50534.1"/>
    <property type="molecule type" value="Genomic_DNA"/>
</dbReference>
<dbReference type="KEGG" id="vg:9924871"/>
<dbReference type="OrthoDB" id="32884at10239"/>
<dbReference type="Proteomes" id="UP000001134">
    <property type="component" value="Genome"/>
</dbReference>
<organism>
    <name type="scientific">Acanthamoeba polyphaga mimivirus</name>
    <name type="common">APMV</name>
    <dbReference type="NCBI Taxonomy" id="212035"/>
    <lineage>
        <taxon>Viruses</taxon>
        <taxon>Varidnaviria</taxon>
        <taxon>Bamfordvirae</taxon>
        <taxon>Nucleocytoviricota</taxon>
        <taxon>Megaviricetes</taxon>
        <taxon>Imitervirales</taxon>
        <taxon>Mimiviridae</taxon>
        <taxon>Megamimivirinae</taxon>
        <taxon>Mimivirus</taxon>
        <taxon>Mimivirus bradfordmassiliense</taxon>
    </lineage>
</organism>
<organismHost>
    <name type="scientific">Acanthamoeba polyphaga</name>
    <name type="common">Amoeba</name>
    <dbReference type="NCBI Taxonomy" id="5757"/>
</organismHost>